<sequence>MAQLDTLDLVVLAVLLVGSVAYFTKGTYWAVAKDPYASTGPAMNGAAKAGKTRNIIEKMEETGKNCVIFYGSQTGTAEDYASRLAKEGSQRFGLKTMVADLEEYDYENLDQFPEDKVAFFVLATYGEGEPTDNAVEFYQFFTGDDVAFESASADEKPLSKLKYVAFGLGNNTYEHYNAMVRQVDAAFQKLGPQRIGSAGEGDDGAGTMEEDFLAWKEPMWAALSESMDLEEREAVYEPVFCVTENESLSPEDETVYLGEPTQSHLQGTPKGPYSAHNPFIAPIAESRELFTVKDRNCLHMEISIAGSNLSYQTGDHIAVWPTNAGAEVDRFLQVFGLEGKRDSVINIKGIDVTAKVPIPTPTTYDAAVRYYMEVCAPVSRQFVATLAAFAPDEESKAEIVRLGSHKDYFHEKVTNQCFNMAQALQSITSKPFSAVPFSLLIEGITKLQPRYYSISSSSLVQKDKISITAVVESVRLPGASHMVKGVTTNYLLALKQKQNGDPSPDPHGLTYSITGPRNKYDGIHVPVHVRHSNFKLPSDPSRPIIMVGPGTGVAPFRGFIQERAALAAKGEKVGPTVLFFGCRKSDEDFLYKDEWKTYQDQLGDNLKIITAFSREGPQKVYVQHRLREHSELVSDLLKQKATFYVCGDAANMAREVNLVLGQIIAAQRGLPAEKGEEMVKHMRRRGRYQEDVWS</sequence>
<gene>
    <name evidence="1" type="primary">cprA</name>
</gene>
<comment type="function">
    <text evidence="1">This enzyme is required for electron transfer from NADP to cytochrome P450 in microsomes. It can also provide electron transfer to heme oxygenase and cytochrome B5. Involved in ergosterol biosynthesis.</text>
</comment>
<comment type="catalytic activity">
    <reaction evidence="1 3 4">
        <text>2 oxidized [cytochrome P450] + NADPH = 2 reduced [cytochrome P450] + NADP(+) + H(+)</text>
        <dbReference type="Rhea" id="RHEA:24040"/>
        <dbReference type="Rhea" id="RHEA-COMP:14627"/>
        <dbReference type="Rhea" id="RHEA-COMP:14628"/>
        <dbReference type="ChEBI" id="CHEBI:15378"/>
        <dbReference type="ChEBI" id="CHEBI:55376"/>
        <dbReference type="ChEBI" id="CHEBI:57783"/>
        <dbReference type="ChEBI" id="CHEBI:58349"/>
        <dbReference type="ChEBI" id="CHEBI:60344"/>
        <dbReference type="EC" id="1.6.2.4"/>
    </reaction>
</comment>
<comment type="cofactor">
    <cofactor evidence="1 3 4">
        <name>FAD</name>
        <dbReference type="ChEBI" id="CHEBI:57692"/>
    </cofactor>
    <text evidence="1">Binds 1 FAD per monomer.</text>
</comment>
<comment type="cofactor">
    <cofactor evidence="1 3 4">
        <name>FMN</name>
        <dbReference type="ChEBI" id="CHEBI:58210"/>
    </cofactor>
    <text evidence="1">Binds 1 FMN per monomer.</text>
</comment>
<comment type="subcellular location">
    <subcellularLocation>
        <location evidence="1">Endoplasmic reticulum membrane</location>
        <topology evidence="1">Single-pass membrane protein</topology>
        <orientation evidence="1">Cytoplasmic side</orientation>
    </subcellularLocation>
    <subcellularLocation>
        <location evidence="1">Mitochondrion outer membrane</location>
        <topology evidence="1">Single-pass membrane protein</topology>
        <orientation evidence="1">Cytoplasmic side</orientation>
    </subcellularLocation>
    <subcellularLocation>
        <location evidence="1">Cell membrane</location>
        <topology evidence="1">Single-pass membrane protein</topology>
        <orientation evidence="1">Cytoplasmic side</orientation>
    </subcellularLocation>
</comment>
<comment type="induction">
    <text evidence="2 4 5">Expression is induced in the presence of benzoic acid (PubMed:10852481, PubMed:7646819, Ref.4). Expression regulation is particularly complex, involving regulatory promoter elements, differential promoter use and regulation at the post-transcriptional level (PubMed:10852481).</text>
</comment>
<comment type="similarity">
    <text evidence="1">Belongs to the NADPH--cytochrome P450 reductase family.</text>
</comment>
<comment type="similarity">
    <text evidence="1">In the N-terminal section; belongs to the flavodoxin family.</text>
</comment>
<comment type="similarity">
    <text evidence="1">In the C-terminal section; belongs to the flavoprotein pyridine nucleotide cytochrome reductase family.</text>
</comment>
<comment type="sequence caution" evidence="6">
    <conflict type="frameshift">
        <sequence resource="EMBL-CDS" id="CAA81550"/>
    </conflict>
</comment>
<dbReference type="EC" id="1.6.2.4" evidence="1"/>
<dbReference type="EMBL" id="Z26938">
    <property type="protein sequence ID" value="CAA81550.1"/>
    <property type="status" value="ALT_FRAME"/>
    <property type="molecule type" value="Genomic_DNA"/>
</dbReference>
<dbReference type="PIR" id="S38427">
    <property type="entry name" value="S38427"/>
</dbReference>
<dbReference type="SMR" id="Q00141"/>
<dbReference type="PaxDb" id="5061-CADANGAP00006979"/>
<dbReference type="VEuPathDB" id="FungiDB:An08g07840"/>
<dbReference type="VEuPathDB" id="FungiDB:ASPNIDRAFT2_1148233"/>
<dbReference type="VEuPathDB" id="FungiDB:ATCC64974_100340"/>
<dbReference type="VEuPathDB" id="FungiDB:M747DRAFT_344448"/>
<dbReference type="eggNOG" id="KOG1158">
    <property type="taxonomic scope" value="Eukaryota"/>
</dbReference>
<dbReference type="GO" id="GO:0005829">
    <property type="term" value="C:cytosol"/>
    <property type="evidence" value="ECO:0007669"/>
    <property type="project" value="TreeGrafter"/>
</dbReference>
<dbReference type="GO" id="GO:0005789">
    <property type="term" value="C:endoplasmic reticulum membrane"/>
    <property type="evidence" value="ECO:0007669"/>
    <property type="project" value="UniProtKB-SubCell"/>
</dbReference>
<dbReference type="GO" id="GO:0043231">
    <property type="term" value="C:intracellular membrane-bounded organelle"/>
    <property type="evidence" value="ECO:0000314"/>
    <property type="project" value="UniProtKB"/>
</dbReference>
<dbReference type="GO" id="GO:0005741">
    <property type="term" value="C:mitochondrial outer membrane"/>
    <property type="evidence" value="ECO:0007669"/>
    <property type="project" value="UniProtKB-SubCell"/>
</dbReference>
<dbReference type="GO" id="GO:0005886">
    <property type="term" value="C:plasma membrane"/>
    <property type="evidence" value="ECO:0007669"/>
    <property type="project" value="UniProtKB-SubCell"/>
</dbReference>
<dbReference type="GO" id="GO:0009055">
    <property type="term" value="F:electron transfer activity"/>
    <property type="evidence" value="ECO:0000314"/>
    <property type="project" value="UniProtKB"/>
</dbReference>
<dbReference type="GO" id="GO:0050660">
    <property type="term" value="F:flavin adenine dinucleotide binding"/>
    <property type="evidence" value="ECO:0007669"/>
    <property type="project" value="UniProtKB-UniRule"/>
</dbReference>
<dbReference type="GO" id="GO:0010181">
    <property type="term" value="F:FMN binding"/>
    <property type="evidence" value="ECO:0007669"/>
    <property type="project" value="UniProtKB-UniRule"/>
</dbReference>
<dbReference type="GO" id="GO:0050661">
    <property type="term" value="F:NADP binding"/>
    <property type="evidence" value="ECO:0007669"/>
    <property type="project" value="UniProtKB-UniRule"/>
</dbReference>
<dbReference type="GO" id="GO:0003958">
    <property type="term" value="F:NADPH-hemoprotein reductase activity"/>
    <property type="evidence" value="ECO:0007669"/>
    <property type="project" value="UniProtKB-UniRule"/>
</dbReference>
<dbReference type="GO" id="GO:0016491">
    <property type="term" value="F:oxidoreductase activity"/>
    <property type="evidence" value="ECO:0000314"/>
    <property type="project" value="UniProtKB"/>
</dbReference>
<dbReference type="GO" id="GO:0006696">
    <property type="term" value="P:ergosterol biosynthetic process"/>
    <property type="evidence" value="ECO:0007669"/>
    <property type="project" value="UniProtKB-UniRule"/>
</dbReference>
<dbReference type="CDD" id="cd06204">
    <property type="entry name" value="CYPOR"/>
    <property type="match status" value="1"/>
</dbReference>
<dbReference type="FunFam" id="1.20.990.10:FF:000009">
    <property type="entry name" value="NADPH--cytochrome P450 reductase"/>
    <property type="match status" value="1"/>
</dbReference>
<dbReference type="FunFam" id="2.40.30.10:FF:000100">
    <property type="entry name" value="NADPH--cytochrome P450 reductase"/>
    <property type="match status" value="1"/>
</dbReference>
<dbReference type="FunFam" id="2.40.30.10:FF:000111">
    <property type="entry name" value="NADPH--cytochrome P450 reductase"/>
    <property type="match status" value="1"/>
</dbReference>
<dbReference type="FunFam" id="3.40.50.360:FF:000024">
    <property type="entry name" value="NADPH--cytochrome P450 reductase"/>
    <property type="match status" value="1"/>
</dbReference>
<dbReference type="FunFam" id="3.40.50.80:FF:000018">
    <property type="entry name" value="NADPH--cytochrome P450 reductase"/>
    <property type="match status" value="1"/>
</dbReference>
<dbReference type="Gene3D" id="3.40.50.360">
    <property type="match status" value="1"/>
</dbReference>
<dbReference type="Gene3D" id="1.20.990.10">
    <property type="entry name" value="NADPH-cytochrome p450 Reductase, Chain A, domain 3"/>
    <property type="match status" value="1"/>
</dbReference>
<dbReference type="Gene3D" id="3.40.50.80">
    <property type="entry name" value="Nucleotide-binding domain of ferredoxin-NADP reductase (FNR) module"/>
    <property type="match status" value="1"/>
</dbReference>
<dbReference type="Gene3D" id="2.40.30.10">
    <property type="entry name" value="Translation factors"/>
    <property type="match status" value="1"/>
</dbReference>
<dbReference type="HAMAP" id="MF_03212">
    <property type="entry name" value="NCPR"/>
    <property type="match status" value="1"/>
</dbReference>
<dbReference type="InterPro" id="IPR003097">
    <property type="entry name" value="CysJ-like_FAD-binding"/>
</dbReference>
<dbReference type="InterPro" id="IPR017927">
    <property type="entry name" value="FAD-bd_FR_type"/>
</dbReference>
<dbReference type="InterPro" id="IPR001094">
    <property type="entry name" value="Flavdoxin-like"/>
</dbReference>
<dbReference type="InterPro" id="IPR008254">
    <property type="entry name" value="Flavodoxin/NO_synth"/>
</dbReference>
<dbReference type="InterPro" id="IPR001709">
    <property type="entry name" value="Flavoprot_Pyr_Nucl_cyt_Rdtase"/>
</dbReference>
<dbReference type="InterPro" id="IPR029039">
    <property type="entry name" value="Flavoprotein-like_sf"/>
</dbReference>
<dbReference type="InterPro" id="IPR039261">
    <property type="entry name" value="FNR_nucleotide-bd"/>
</dbReference>
<dbReference type="InterPro" id="IPR023173">
    <property type="entry name" value="NADPH_Cyt_P450_Rdtase_alpha"/>
</dbReference>
<dbReference type="InterPro" id="IPR001433">
    <property type="entry name" value="OxRdtase_FAD/NAD-bd"/>
</dbReference>
<dbReference type="InterPro" id="IPR023208">
    <property type="entry name" value="P450R"/>
</dbReference>
<dbReference type="InterPro" id="IPR017938">
    <property type="entry name" value="Riboflavin_synthase-like_b-brl"/>
</dbReference>
<dbReference type="PANTHER" id="PTHR19384:SF17">
    <property type="entry name" value="NADPH--CYTOCHROME P450 REDUCTASE"/>
    <property type="match status" value="1"/>
</dbReference>
<dbReference type="PANTHER" id="PTHR19384">
    <property type="entry name" value="NITRIC OXIDE SYNTHASE-RELATED"/>
    <property type="match status" value="1"/>
</dbReference>
<dbReference type="Pfam" id="PF00667">
    <property type="entry name" value="FAD_binding_1"/>
    <property type="match status" value="1"/>
</dbReference>
<dbReference type="Pfam" id="PF00258">
    <property type="entry name" value="Flavodoxin_1"/>
    <property type="match status" value="1"/>
</dbReference>
<dbReference type="Pfam" id="PF00175">
    <property type="entry name" value="NAD_binding_1"/>
    <property type="match status" value="1"/>
</dbReference>
<dbReference type="PIRSF" id="PIRSF000208">
    <property type="entry name" value="P450R"/>
    <property type="match status" value="1"/>
</dbReference>
<dbReference type="PRINTS" id="PR00369">
    <property type="entry name" value="FLAVODOXIN"/>
</dbReference>
<dbReference type="PRINTS" id="PR00371">
    <property type="entry name" value="FPNCR"/>
</dbReference>
<dbReference type="SUPFAM" id="SSF52343">
    <property type="entry name" value="Ferredoxin reductase-like, C-terminal NADP-linked domain"/>
    <property type="match status" value="1"/>
</dbReference>
<dbReference type="SUPFAM" id="SSF52218">
    <property type="entry name" value="Flavoproteins"/>
    <property type="match status" value="1"/>
</dbReference>
<dbReference type="SUPFAM" id="SSF63380">
    <property type="entry name" value="Riboflavin synthase domain-like"/>
    <property type="match status" value="1"/>
</dbReference>
<dbReference type="PROSITE" id="PS51384">
    <property type="entry name" value="FAD_FR"/>
    <property type="match status" value="1"/>
</dbReference>
<dbReference type="PROSITE" id="PS50902">
    <property type="entry name" value="FLAVODOXIN_LIKE"/>
    <property type="match status" value="1"/>
</dbReference>
<proteinExistence type="evidence at protein level"/>
<feature type="chain" id="PRO_0000167604" description="NADPH--cytochrome P450 reductase">
    <location>
        <begin position="1"/>
        <end position="694"/>
    </location>
</feature>
<feature type="topological domain" description="Lumenal" evidence="1">
    <location>
        <begin position="1"/>
        <end position="8"/>
    </location>
</feature>
<feature type="transmembrane region" description="Helical" evidence="1">
    <location>
        <begin position="9"/>
        <end position="31"/>
    </location>
</feature>
<feature type="topological domain" description="Cytoplasmic" evidence="1">
    <location>
        <begin position="32"/>
        <end position="694"/>
    </location>
</feature>
<feature type="domain" description="Flavodoxin-like" evidence="1">
    <location>
        <begin position="66"/>
        <end position="220"/>
    </location>
</feature>
<feature type="domain" description="FAD-binding FR-type" evidence="1">
    <location>
        <begin position="276"/>
        <end position="537"/>
    </location>
</feature>
<feature type="binding site" evidence="1">
    <location>
        <begin position="72"/>
        <end position="77"/>
    </location>
    <ligand>
        <name>FMN</name>
        <dbReference type="ChEBI" id="CHEBI:58210"/>
    </ligand>
</feature>
<feature type="binding site" evidence="1">
    <location>
        <begin position="123"/>
        <end position="126"/>
    </location>
    <ligand>
        <name>FMN</name>
        <dbReference type="ChEBI" id="CHEBI:58210"/>
    </ligand>
</feature>
<feature type="binding site" evidence="1">
    <location>
        <begin position="168"/>
        <end position="177"/>
    </location>
    <ligand>
        <name>FMN</name>
        <dbReference type="ChEBI" id="CHEBI:58210"/>
    </ligand>
</feature>
<feature type="binding site" evidence="1">
    <location>
        <position position="203"/>
    </location>
    <ligand>
        <name>FMN</name>
        <dbReference type="ChEBI" id="CHEBI:58210"/>
    </ligand>
</feature>
<feature type="binding site" evidence="1">
    <location>
        <position position="295"/>
    </location>
    <ligand>
        <name>NADP(+)</name>
        <dbReference type="ChEBI" id="CHEBI:58349"/>
    </ligand>
</feature>
<feature type="binding site" evidence="1">
    <location>
        <begin position="450"/>
        <end position="453"/>
    </location>
    <ligand>
        <name>FAD</name>
        <dbReference type="ChEBI" id="CHEBI:57692"/>
    </ligand>
</feature>
<feature type="binding site" evidence="1">
    <location>
        <begin position="468"/>
        <end position="470"/>
    </location>
    <ligand>
        <name>FAD</name>
        <dbReference type="ChEBI" id="CHEBI:57692"/>
    </ligand>
</feature>
<feature type="binding site" evidence="1">
    <location>
        <begin position="485"/>
        <end position="488"/>
    </location>
    <ligand>
        <name>FAD</name>
        <dbReference type="ChEBI" id="CHEBI:57692"/>
    </ligand>
</feature>
<feature type="binding site" evidence="1">
    <location>
        <position position="551"/>
    </location>
    <ligand>
        <name>NADP(+)</name>
        <dbReference type="ChEBI" id="CHEBI:58349"/>
    </ligand>
</feature>
<feature type="binding site" evidence="1">
    <location>
        <begin position="613"/>
        <end position="614"/>
    </location>
    <ligand>
        <name>NADP(+)</name>
        <dbReference type="ChEBI" id="CHEBI:58349"/>
    </ligand>
</feature>
<feature type="binding site" evidence="1">
    <location>
        <begin position="619"/>
        <end position="623"/>
    </location>
    <ligand>
        <name>NADP(+)</name>
        <dbReference type="ChEBI" id="CHEBI:58349"/>
    </ligand>
</feature>
<feature type="binding site" evidence="1">
    <location>
        <position position="655"/>
    </location>
    <ligand>
        <name>NADP(+)</name>
        <dbReference type="ChEBI" id="CHEBI:58349"/>
    </ligand>
</feature>
<feature type="binding site" evidence="1">
    <location>
        <position position="693"/>
    </location>
    <ligand>
        <name>FAD</name>
        <dbReference type="ChEBI" id="CHEBI:57692"/>
    </ligand>
</feature>
<reference evidence="6" key="1">
    <citation type="journal article" date="1995" name="DNA Cell Biol.">
        <title>Cloning and characterization of the NADPH cytochrome P450 oxidoreductase gene from the filamentous fungus Aspergillus niger.</title>
        <authorList>
            <person name="van den Brink H.J.M."/>
            <person name="van Zeijl C.M.J."/>
            <person name="Brons J.F."/>
            <person name="van den Hondel C.A.M.J.J."/>
            <person name="van Gorcom R.F.M."/>
        </authorList>
    </citation>
    <scope>NUCLEOTIDE SEQUENCE [GENOMIC DNA]</scope>
    <scope>CATALYTIC ACTIVITY</scope>
    <scope>INDUCTION</scope>
    <source>
        <strain>ATCC 9029 / NRRL 3 / CBS 120.49 / DSM 2466 / N400 / FGSC 732</strain>
    </source>
</reference>
<reference key="2">
    <citation type="journal article" date="2000" name="Mol. Gen. Genet.">
        <title>Regulation of expression of the Aspergillus niger benzoate para-hydroxylase cytochrome P450 system.</title>
        <authorList>
            <person name="van den Brink J.M."/>
            <person name="Punt P.J."/>
            <person name="van Gorcom R.F."/>
            <person name="van den Hondel C.A."/>
        </authorList>
    </citation>
    <scope>INDUCTION</scope>
</reference>
<reference evidence="6" key="3">
    <citation type="journal article" date="2001" name="Arch. Biochem. Biophys.">
        <title>Purification and characterization of benzoate-para-hydroxylase, a cytochrome P450 (CYP53A1), from Aspergillus niger.</title>
        <authorList>
            <person name="Faber B.W."/>
            <person name="van Gorcom R.F.M."/>
            <person name="Duine J.A."/>
        </authorList>
    </citation>
    <scope>CATALYTIC ACTIVITY</scope>
    <source>
        <strain>T18.5</strain>
    </source>
</reference>
<reference key="4">
    <citation type="journal article" date="2019" name="ACS Sustain. Chem. Eng.">
        <title>Discovery of novel p-hydroxybenzoate-m-hydroxylase, protocatechuate 3,4 ring-cleavage dioxygenase, and hydroxyquinol 1,2 ring-cleavage dioxygenase from the filamentous fungus Aspergillus niger.</title>
        <authorList>
            <person name="Lubbers R.J.M."/>
            <person name="Dilokpimol A."/>
            <person name="Peng M."/>
            <person name="Visser J."/>
            <person name="Makela M.R."/>
            <person name="Hilden K.S."/>
            <person name="de Vries R.P."/>
        </authorList>
    </citation>
    <scope>INDUCTION</scope>
</reference>
<protein>
    <recommendedName>
        <fullName evidence="1">NADPH--cytochrome P450 reductase</fullName>
        <shortName evidence="1">CPR</shortName>
        <shortName evidence="1">P450R</shortName>
        <ecNumber evidence="1">1.6.2.4</ecNumber>
    </recommendedName>
</protein>
<accession>Q00141</accession>
<name>NCPR_ASPNG</name>
<evidence type="ECO:0000255" key="1">
    <source>
        <dbReference type="HAMAP-Rule" id="MF_03212"/>
    </source>
</evidence>
<evidence type="ECO:0000269" key="2">
    <source>
    </source>
</evidence>
<evidence type="ECO:0000269" key="3">
    <source>
    </source>
</evidence>
<evidence type="ECO:0000269" key="4">
    <source>
    </source>
</evidence>
<evidence type="ECO:0000269" key="5">
    <source ref="4"/>
</evidence>
<evidence type="ECO:0000305" key="6"/>
<evidence type="ECO:0000312" key="7">
    <source>
        <dbReference type="EMBL" id="CAA81550.1"/>
    </source>
</evidence>
<keyword id="KW-1003">Cell membrane</keyword>
<keyword id="KW-0256">Endoplasmic reticulum</keyword>
<keyword id="KW-0274">FAD</keyword>
<keyword id="KW-0285">Flavoprotein</keyword>
<keyword id="KW-0288">FMN</keyword>
<keyword id="KW-0444">Lipid biosynthesis</keyword>
<keyword id="KW-0443">Lipid metabolism</keyword>
<keyword id="KW-0472">Membrane</keyword>
<keyword id="KW-0496">Mitochondrion</keyword>
<keyword id="KW-1000">Mitochondrion outer membrane</keyword>
<keyword id="KW-0521">NADP</keyword>
<keyword id="KW-0560">Oxidoreductase</keyword>
<keyword id="KW-0752">Steroid biosynthesis</keyword>
<keyword id="KW-0753">Steroid metabolism</keyword>
<keyword id="KW-0756">Sterol biosynthesis</keyword>
<keyword id="KW-1207">Sterol metabolism</keyword>
<keyword id="KW-0812">Transmembrane</keyword>
<keyword id="KW-1133">Transmembrane helix</keyword>
<organism evidence="7">
    <name type="scientific">Aspergillus niger</name>
    <dbReference type="NCBI Taxonomy" id="5061"/>
    <lineage>
        <taxon>Eukaryota</taxon>
        <taxon>Fungi</taxon>
        <taxon>Dikarya</taxon>
        <taxon>Ascomycota</taxon>
        <taxon>Pezizomycotina</taxon>
        <taxon>Eurotiomycetes</taxon>
        <taxon>Eurotiomycetidae</taxon>
        <taxon>Eurotiales</taxon>
        <taxon>Aspergillaceae</taxon>
        <taxon>Aspergillus</taxon>
        <taxon>Aspergillus subgen. Circumdati</taxon>
    </lineage>
</organism>